<keyword id="KW-0150">Chloroplast</keyword>
<keyword id="KW-0934">Plastid</keyword>
<keyword id="KW-0687">Ribonucleoprotein</keyword>
<keyword id="KW-0689">Ribosomal protein</keyword>
<keyword id="KW-0694">RNA-binding</keyword>
<keyword id="KW-0699">rRNA-binding</keyword>
<comment type="function">
    <text evidence="1">One of the primary rRNA binding proteins, it binds directly to 16S rRNA where it nucleates assembly of the head domain of the 30S subunit.</text>
</comment>
<comment type="subunit">
    <text>Part of the 30S ribosomal subunit.</text>
</comment>
<comment type="subcellular location">
    <subcellularLocation>
        <location>Plastid</location>
        <location>Chloroplast</location>
    </subcellularLocation>
</comment>
<comment type="similarity">
    <text evidence="2">Belongs to the universal ribosomal protein uS7 family.</text>
</comment>
<evidence type="ECO:0000250" key="1"/>
<evidence type="ECO:0000305" key="2"/>
<sequence length="155" mass="17375">MSRRGTAEEKTAKSDPIYRNRLVNMLVNRILKHGKKSLAYQILYRAMKKIQQKTETNPLSVLRQAIRGVTPDIAVKARRVGGSTHQVPIEIGSTQGKALAIRWLLGASRKRPGRNMAFKLSSELVDAAKGSGDAIRKKEETHRMAEANRAFAHFR</sequence>
<protein>
    <recommendedName>
        <fullName evidence="2">Small ribosomal subunit protein uS7c</fullName>
    </recommendedName>
    <alternativeName>
        <fullName>30S ribosomal protein S7, chloroplastic</fullName>
    </alternativeName>
</protein>
<reference key="1">
    <citation type="submission" date="2003-02" db="EMBL/GenBank/DDBJ databases">
        <title>Parsing out signal and noise for seed-plant phylogenetic inference.</title>
        <authorList>
            <person name="Graham S.W."/>
            <person name="Rai H.S."/>
            <person name="Ikegami K."/>
            <person name="Reeves P.A."/>
            <person name="Olmstead R.G."/>
        </authorList>
    </citation>
    <scope>NUCLEOTIDE SEQUENCE [GENOMIC DNA]</scope>
</reference>
<feature type="chain" id="PRO_0000124455" description="Small ribosomal subunit protein uS7c">
    <location>
        <begin position="1"/>
        <end position="155"/>
    </location>
</feature>
<organism>
    <name type="scientific">Euonymus alatus</name>
    <name type="common">Burning bush</name>
    <name type="synonym">Celastrus alatus</name>
    <dbReference type="NCBI Taxonomy" id="4307"/>
    <lineage>
        <taxon>Eukaryota</taxon>
        <taxon>Viridiplantae</taxon>
        <taxon>Streptophyta</taxon>
        <taxon>Embryophyta</taxon>
        <taxon>Tracheophyta</taxon>
        <taxon>Spermatophyta</taxon>
        <taxon>Magnoliopsida</taxon>
        <taxon>eudicotyledons</taxon>
        <taxon>Gunneridae</taxon>
        <taxon>Pentapetalae</taxon>
        <taxon>rosids</taxon>
        <taxon>fabids</taxon>
        <taxon>Celastrales</taxon>
        <taxon>Celastraceae</taxon>
        <taxon>Euonymus</taxon>
    </lineage>
</organism>
<dbReference type="EMBL" id="AY237135">
    <property type="protein sequence ID" value="AAQ64542.1"/>
    <property type="molecule type" value="Genomic_DNA"/>
</dbReference>
<dbReference type="SMR" id="Q6EM99"/>
<dbReference type="GO" id="GO:0009507">
    <property type="term" value="C:chloroplast"/>
    <property type="evidence" value="ECO:0007669"/>
    <property type="project" value="UniProtKB-SubCell"/>
</dbReference>
<dbReference type="GO" id="GO:0015935">
    <property type="term" value="C:small ribosomal subunit"/>
    <property type="evidence" value="ECO:0007669"/>
    <property type="project" value="InterPro"/>
</dbReference>
<dbReference type="GO" id="GO:0019843">
    <property type="term" value="F:rRNA binding"/>
    <property type="evidence" value="ECO:0007669"/>
    <property type="project" value="UniProtKB-UniRule"/>
</dbReference>
<dbReference type="GO" id="GO:0003735">
    <property type="term" value="F:structural constituent of ribosome"/>
    <property type="evidence" value="ECO:0007669"/>
    <property type="project" value="InterPro"/>
</dbReference>
<dbReference type="GO" id="GO:0006412">
    <property type="term" value="P:translation"/>
    <property type="evidence" value="ECO:0007669"/>
    <property type="project" value="UniProtKB-UniRule"/>
</dbReference>
<dbReference type="CDD" id="cd14871">
    <property type="entry name" value="uS7_Chloroplast"/>
    <property type="match status" value="1"/>
</dbReference>
<dbReference type="FunFam" id="1.10.455.10:FF:000001">
    <property type="entry name" value="30S ribosomal protein S7"/>
    <property type="match status" value="1"/>
</dbReference>
<dbReference type="Gene3D" id="1.10.455.10">
    <property type="entry name" value="Ribosomal protein S7 domain"/>
    <property type="match status" value="1"/>
</dbReference>
<dbReference type="HAMAP" id="MF_00480_B">
    <property type="entry name" value="Ribosomal_uS7_B"/>
    <property type="match status" value="1"/>
</dbReference>
<dbReference type="InterPro" id="IPR000235">
    <property type="entry name" value="Ribosomal_uS7"/>
</dbReference>
<dbReference type="InterPro" id="IPR005717">
    <property type="entry name" value="Ribosomal_uS7_bac/org-type"/>
</dbReference>
<dbReference type="InterPro" id="IPR020606">
    <property type="entry name" value="Ribosomal_uS7_CS"/>
</dbReference>
<dbReference type="InterPro" id="IPR023798">
    <property type="entry name" value="Ribosomal_uS7_dom"/>
</dbReference>
<dbReference type="InterPro" id="IPR036823">
    <property type="entry name" value="Ribosomal_uS7_dom_sf"/>
</dbReference>
<dbReference type="NCBIfam" id="TIGR01029">
    <property type="entry name" value="rpsG_bact"/>
    <property type="match status" value="1"/>
</dbReference>
<dbReference type="PANTHER" id="PTHR11205">
    <property type="entry name" value="RIBOSOMAL PROTEIN S7"/>
    <property type="match status" value="1"/>
</dbReference>
<dbReference type="Pfam" id="PF00177">
    <property type="entry name" value="Ribosomal_S7"/>
    <property type="match status" value="1"/>
</dbReference>
<dbReference type="PIRSF" id="PIRSF002122">
    <property type="entry name" value="RPS7p_RPS7a_RPS5e_RPS7o"/>
    <property type="match status" value="1"/>
</dbReference>
<dbReference type="SUPFAM" id="SSF47973">
    <property type="entry name" value="Ribosomal protein S7"/>
    <property type="match status" value="1"/>
</dbReference>
<dbReference type="PROSITE" id="PS00052">
    <property type="entry name" value="RIBOSOMAL_S7"/>
    <property type="match status" value="1"/>
</dbReference>
<name>RR7_EUOAL</name>
<geneLocation type="chloroplast"/>
<gene>
    <name type="primary">rps7</name>
</gene>
<proteinExistence type="inferred from homology"/>
<accession>Q6EM99</accession>